<dbReference type="EMBL" id="AP002047">
    <property type="protein sequence ID" value="BAB03143.1"/>
    <property type="status" value="ALT_SEQ"/>
    <property type="molecule type" value="Genomic_DNA"/>
</dbReference>
<dbReference type="EMBL" id="AC069474">
    <property type="protein sequence ID" value="AAG51002.1"/>
    <property type="molecule type" value="Genomic_DNA"/>
</dbReference>
<dbReference type="EMBL" id="CP002686">
    <property type="protein sequence ID" value="AEE75188.1"/>
    <property type="molecule type" value="Genomic_DNA"/>
</dbReference>
<dbReference type="EMBL" id="AY085485">
    <property type="protein sequence ID" value="AAM62711.1"/>
    <property type="status" value="ALT_INIT"/>
    <property type="molecule type" value="mRNA"/>
</dbReference>
<dbReference type="RefSeq" id="NP_187842.1">
    <property type="nucleotide sequence ID" value="NM_112071.3"/>
</dbReference>
<dbReference type="SMR" id="Q9C7A2"/>
<dbReference type="BioGRID" id="5748">
    <property type="interactions" value="2"/>
</dbReference>
<dbReference type="FunCoup" id="Q9C7A2">
    <property type="interactions" value="1761"/>
</dbReference>
<dbReference type="STRING" id="3702.Q9C7A2"/>
<dbReference type="GlyGen" id="Q9C7A2">
    <property type="glycosylation" value="1 site"/>
</dbReference>
<dbReference type="PaxDb" id="3702-AT3G12360.1"/>
<dbReference type="ProteomicsDB" id="238956"/>
<dbReference type="EnsemblPlants" id="AT3G12360.1">
    <property type="protein sequence ID" value="AT3G12360.1"/>
    <property type="gene ID" value="AT3G12360"/>
</dbReference>
<dbReference type="GeneID" id="820414"/>
<dbReference type="Gramene" id="AT3G12360.1">
    <property type="protein sequence ID" value="AT3G12360.1"/>
    <property type="gene ID" value="AT3G12360"/>
</dbReference>
<dbReference type="KEGG" id="ath:AT3G12360"/>
<dbReference type="Araport" id="AT3G12360"/>
<dbReference type="TAIR" id="AT3G12360">
    <property type="gene designation" value="ITN1"/>
</dbReference>
<dbReference type="eggNOG" id="KOG0504">
    <property type="taxonomic scope" value="Eukaryota"/>
</dbReference>
<dbReference type="HOGENOM" id="CLU_000134_49_0_1"/>
<dbReference type="InParanoid" id="Q9C7A2"/>
<dbReference type="PhylomeDB" id="Q9C7A2"/>
<dbReference type="PRO" id="PR:Q9C7A2"/>
<dbReference type="Proteomes" id="UP000006548">
    <property type="component" value="Chromosome 3"/>
</dbReference>
<dbReference type="ExpressionAtlas" id="Q9C7A2">
    <property type="expression patterns" value="baseline and differential"/>
</dbReference>
<dbReference type="GO" id="GO:0005634">
    <property type="term" value="C:nucleus"/>
    <property type="evidence" value="ECO:0000353"/>
    <property type="project" value="TAIR"/>
</dbReference>
<dbReference type="GO" id="GO:0005886">
    <property type="term" value="C:plasma membrane"/>
    <property type="evidence" value="ECO:0000314"/>
    <property type="project" value="TAIR"/>
</dbReference>
<dbReference type="GO" id="GO:0009651">
    <property type="term" value="P:response to salt stress"/>
    <property type="evidence" value="ECO:0000315"/>
    <property type="project" value="TAIR"/>
</dbReference>
<dbReference type="FunFam" id="1.25.40.20:FF:000217">
    <property type="entry name" value="Ankyrin repeat-containing protein ITN1"/>
    <property type="match status" value="1"/>
</dbReference>
<dbReference type="FunFam" id="1.25.40.20:FF:000245">
    <property type="entry name" value="Ankyrin repeat-containing protein ITN1"/>
    <property type="match status" value="1"/>
</dbReference>
<dbReference type="Gene3D" id="1.25.40.20">
    <property type="entry name" value="Ankyrin repeat-containing domain"/>
    <property type="match status" value="3"/>
</dbReference>
<dbReference type="InterPro" id="IPR002110">
    <property type="entry name" value="Ankyrin_rpt"/>
</dbReference>
<dbReference type="InterPro" id="IPR036770">
    <property type="entry name" value="Ankyrin_rpt-contain_sf"/>
</dbReference>
<dbReference type="InterPro" id="IPR026961">
    <property type="entry name" value="PGG_dom"/>
</dbReference>
<dbReference type="PANTHER" id="PTHR24186:SF48">
    <property type="entry name" value="ANKYRIN REPEAT-CONTAINING PROTEIN ITN1"/>
    <property type="match status" value="1"/>
</dbReference>
<dbReference type="PANTHER" id="PTHR24186">
    <property type="entry name" value="PROTEIN PHOSPHATASE 1 REGULATORY SUBUNIT"/>
    <property type="match status" value="1"/>
</dbReference>
<dbReference type="Pfam" id="PF12796">
    <property type="entry name" value="Ank_2"/>
    <property type="match status" value="3"/>
</dbReference>
<dbReference type="Pfam" id="PF13962">
    <property type="entry name" value="PGG"/>
    <property type="match status" value="1"/>
</dbReference>
<dbReference type="SMART" id="SM00248">
    <property type="entry name" value="ANK"/>
    <property type="match status" value="7"/>
</dbReference>
<dbReference type="SUPFAM" id="SSF48403">
    <property type="entry name" value="Ankyrin repeat"/>
    <property type="match status" value="1"/>
</dbReference>
<dbReference type="PROSITE" id="PS50297">
    <property type="entry name" value="ANK_REP_REGION"/>
    <property type="match status" value="1"/>
</dbReference>
<dbReference type="PROSITE" id="PS50088">
    <property type="entry name" value="ANK_REPEAT"/>
    <property type="match status" value="5"/>
</dbReference>
<sequence>MAASSYVDGERDMEKGGMILLQSSENQNPMIDPSPTPSPSATATAPALVLSNSGKRMDQAGKKKYVKQVTGRHNDTELHLAAQRGDLAAVQQILKDINSQMEGILSGEEFDAEVAEIRASIVNEVNELGETALFTAADKGHLDVVKELLKYSSRESIAKKNRSGYDPLHIAAIQGHHAIVEVLLDHDATLSQTFGPSNATPLVSAAMRGHTEVVNQLLSKAGNLLEISRSNNKNALHLAARQGHVEVIKALLSKDPQLARRIDKKGQTALHMAVKGQSSEVVKLLLDADPAIVMQPDKSCNTALHVATRKKRAEIVELLLSLPDTNANTLTRDHKTALDIAEGLPLSEESSYIKECLARSGALRANELNQPRDELRSTVTQIKNDVHIQLEQTKRTNKNVHNISKELRKLHREGINNATNSVTVVAVLFATVAFAAIFTVPGGDNNDGSAVVVGRASFKIFFIFNALALFTSLAVVVVQITLVRGETKAEKRVVEVINKLMWLASMCTSVAFLASSYIVVGRKNEWAAELVTVVGGVIMAGVLGTMTYYVVKSKRTRSMRKKVKSARRSGSNSWHHSDFSNSEVDPIFAI</sequence>
<gene>
    <name evidence="5" type="primary">ITN1</name>
    <name type="ordered locus">At3g12360</name>
    <name type="ORF">MQC3.17</name>
    <name type="ORF">T2E22.31</name>
</gene>
<keyword id="KW-0040">ANK repeat</keyword>
<keyword id="KW-1003">Cell membrane</keyword>
<keyword id="KW-0472">Membrane</keyword>
<keyword id="KW-1185">Reference proteome</keyword>
<keyword id="KW-0677">Repeat</keyword>
<keyword id="KW-0346">Stress response</keyword>
<keyword id="KW-0812">Transmembrane</keyword>
<keyword id="KW-1133">Transmembrane helix</keyword>
<comment type="function">
    <text evidence="3">Involved in salt stress tolerance. May act through abscisic acid (ABA) signaling pathways and promote reactive oxygen species (ROS) production.</text>
</comment>
<comment type="subunit">
    <text evidence="4">Interacts with REM19/RTV1.</text>
</comment>
<comment type="subcellular location">
    <subcellularLocation>
        <location evidence="3 4">Cell membrane</location>
        <topology evidence="1">Multi-pass membrane protein</topology>
    </subcellularLocation>
</comment>
<comment type="tissue specificity">
    <text evidence="3">Expressed in roots, shoots, leaf vasculature and stems.</text>
</comment>
<comment type="induction">
    <text evidence="3">By salt and drought stresses.</text>
</comment>
<comment type="disruption phenotype">
    <text evidence="3">No visible phenotype under normal growth conditions, but mutant seedlings show increased salt-stress tolerance.</text>
</comment>
<comment type="sequence caution" evidence="6">
    <conflict type="erroneous initiation">
        <sequence resource="EMBL-CDS" id="AAM62711"/>
    </conflict>
    <text>Truncated N-terminus.</text>
</comment>
<comment type="sequence caution" evidence="6">
    <conflict type="erroneous gene model prediction">
        <sequence resource="EMBL-CDS" id="BAB03143"/>
    </conflict>
    <text>The predicted gene At3g12350 has been split into 2 genes: At3g12350 and At3g12360.</text>
</comment>
<protein>
    <recommendedName>
        <fullName>Ankyrin repeat-containing protein ITN1</fullName>
    </recommendedName>
    <alternativeName>
        <fullName evidence="5">Protein INCREASED TOLERANCE TO NACL</fullName>
    </alternativeName>
</protein>
<evidence type="ECO:0000255" key="1"/>
<evidence type="ECO:0000256" key="2">
    <source>
        <dbReference type="SAM" id="MobiDB-lite"/>
    </source>
</evidence>
<evidence type="ECO:0000269" key="3">
    <source>
    </source>
</evidence>
<evidence type="ECO:0000269" key="4">
    <source>
    </source>
</evidence>
<evidence type="ECO:0000303" key="5">
    <source>
    </source>
</evidence>
<evidence type="ECO:0000305" key="6"/>
<reference key="1">
    <citation type="journal article" date="2000" name="DNA Res.">
        <title>Structural analysis of Arabidopsis thaliana chromosome 3. II. Sequence features of the 4,251,695 bp regions covered by 90 P1, TAC and BAC clones.</title>
        <authorList>
            <person name="Kaneko T."/>
            <person name="Katoh T."/>
            <person name="Sato S."/>
            <person name="Nakamura Y."/>
            <person name="Asamizu E."/>
            <person name="Tabata S."/>
        </authorList>
    </citation>
    <scope>NUCLEOTIDE SEQUENCE [LARGE SCALE GENOMIC DNA]</scope>
    <source>
        <strain>cv. Columbia</strain>
    </source>
</reference>
<reference key="2">
    <citation type="journal article" date="2000" name="Nature">
        <title>Sequence and analysis of chromosome 3 of the plant Arabidopsis thaliana.</title>
        <authorList>
            <person name="Salanoubat M."/>
            <person name="Lemcke K."/>
            <person name="Rieger M."/>
            <person name="Ansorge W."/>
            <person name="Unseld M."/>
            <person name="Fartmann B."/>
            <person name="Valle G."/>
            <person name="Bloecker H."/>
            <person name="Perez-Alonso M."/>
            <person name="Obermaier B."/>
            <person name="Delseny M."/>
            <person name="Boutry M."/>
            <person name="Grivell L.A."/>
            <person name="Mache R."/>
            <person name="Puigdomenech P."/>
            <person name="De Simone V."/>
            <person name="Choisne N."/>
            <person name="Artiguenave F."/>
            <person name="Robert C."/>
            <person name="Brottier P."/>
            <person name="Wincker P."/>
            <person name="Cattolico L."/>
            <person name="Weissenbach J."/>
            <person name="Saurin W."/>
            <person name="Quetier F."/>
            <person name="Schaefer M."/>
            <person name="Mueller-Auer S."/>
            <person name="Gabel C."/>
            <person name="Fuchs M."/>
            <person name="Benes V."/>
            <person name="Wurmbach E."/>
            <person name="Drzonek H."/>
            <person name="Erfle H."/>
            <person name="Jordan N."/>
            <person name="Bangert S."/>
            <person name="Wiedelmann R."/>
            <person name="Kranz H."/>
            <person name="Voss H."/>
            <person name="Holland R."/>
            <person name="Brandt P."/>
            <person name="Nyakatura G."/>
            <person name="Vezzi A."/>
            <person name="D'Angelo M."/>
            <person name="Pallavicini A."/>
            <person name="Toppo S."/>
            <person name="Simionati B."/>
            <person name="Conrad A."/>
            <person name="Hornischer K."/>
            <person name="Kauer G."/>
            <person name="Loehnert T.-H."/>
            <person name="Nordsiek G."/>
            <person name="Reichelt J."/>
            <person name="Scharfe M."/>
            <person name="Schoen O."/>
            <person name="Bargues M."/>
            <person name="Terol J."/>
            <person name="Climent J."/>
            <person name="Navarro P."/>
            <person name="Collado C."/>
            <person name="Perez-Perez A."/>
            <person name="Ottenwaelder B."/>
            <person name="Duchemin D."/>
            <person name="Cooke R."/>
            <person name="Laudie M."/>
            <person name="Berger-Llauro C."/>
            <person name="Purnelle B."/>
            <person name="Masuy D."/>
            <person name="de Haan M."/>
            <person name="Maarse A.C."/>
            <person name="Alcaraz J.-P."/>
            <person name="Cottet A."/>
            <person name="Casacuberta E."/>
            <person name="Monfort A."/>
            <person name="Argiriou A."/>
            <person name="Flores M."/>
            <person name="Liguori R."/>
            <person name="Vitale D."/>
            <person name="Mannhaupt G."/>
            <person name="Haase D."/>
            <person name="Schoof H."/>
            <person name="Rudd S."/>
            <person name="Zaccaria P."/>
            <person name="Mewes H.-W."/>
            <person name="Mayer K.F.X."/>
            <person name="Kaul S."/>
            <person name="Town C.D."/>
            <person name="Koo H.L."/>
            <person name="Tallon L.J."/>
            <person name="Jenkins J."/>
            <person name="Rooney T."/>
            <person name="Rizzo M."/>
            <person name="Walts A."/>
            <person name="Utterback T."/>
            <person name="Fujii C.Y."/>
            <person name="Shea T.P."/>
            <person name="Creasy T.H."/>
            <person name="Haas B."/>
            <person name="Maiti R."/>
            <person name="Wu D."/>
            <person name="Peterson J."/>
            <person name="Van Aken S."/>
            <person name="Pai G."/>
            <person name="Militscher J."/>
            <person name="Sellers P."/>
            <person name="Gill J.E."/>
            <person name="Feldblyum T.V."/>
            <person name="Preuss D."/>
            <person name="Lin X."/>
            <person name="Nierman W.C."/>
            <person name="Salzberg S.L."/>
            <person name="White O."/>
            <person name="Venter J.C."/>
            <person name="Fraser C.M."/>
            <person name="Kaneko T."/>
            <person name="Nakamura Y."/>
            <person name="Sato S."/>
            <person name="Kato T."/>
            <person name="Asamizu E."/>
            <person name="Sasamoto S."/>
            <person name="Kimura T."/>
            <person name="Idesawa K."/>
            <person name="Kawashima K."/>
            <person name="Kishida Y."/>
            <person name="Kiyokawa C."/>
            <person name="Kohara M."/>
            <person name="Matsumoto M."/>
            <person name="Matsuno A."/>
            <person name="Muraki A."/>
            <person name="Nakayama S."/>
            <person name="Nakazaki N."/>
            <person name="Shinpo S."/>
            <person name="Takeuchi C."/>
            <person name="Wada T."/>
            <person name="Watanabe A."/>
            <person name="Yamada M."/>
            <person name="Yasuda M."/>
            <person name="Tabata S."/>
        </authorList>
    </citation>
    <scope>NUCLEOTIDE SEQUENCE [LARGE SCALE GENOMIC DNA]</scope>
    <source>
        <strain>cv. Columbia</strain>
    </source>
</reference>
<reference key="3">
    <citation type="journal article" date="2017" name="Plant J.">
        <title>Araport11: a complete reannotation of the Arabidopsis thaliana reference genome.</title>
        <authorList>
            <person name="Cheng C.Y."/>
            <person name="Krishnakumar V."/>
            <person name="Chan A.P."/>
            <person name="Thibaud-Nissen F."/>
            <person name="Schobel S."/>
            <person name="Town C.D."/>
        </authorList>
    </citation>
    <scope>GENOME REANNOTATION</scope>
    <source>
        <strain>cv. Columbia</strain>
    </source>
</reference>
<reference key="4">
    <citation type="submission" date="2002-03" db="EMBL/GenBank/DDBJ databases">
        <title>Full-length cDNA from Arabidopsis thaliana.</title>
        <authorList>
            <person name="Brover V.V."/>
            <person name="Troukhan M.E."/>
            <person name="Alexandrov N.A."/>
            <person name="Lu Y.-P."/>
            <person name="Flavell R.B."/>
            <person name="Feldmann K.A."/>
        </authorList>
    </citation>
    <scope>NUCLEOTIDE SEQUENCE [LARGE SCALE MRNA]</scope>
</reference>
<reference key="5">
    <citation type="journal article" date="2008" name="Plant J.">
        <title>ITN1, a novel gene encoding an ankyrin-repeat protein that affects the ABA-mediated production of reactive oxygen species and is involved in salt-stress tolerance in Arabidopsis thaliana.</title>
        <authorList>
            <person name="Sakamoto H."/>
            <person name="Matsuda O."/>
            <person name="Iba K."/>
        </authorList>
    </citation>
    <scope>FUNCTION</scope>
    <scope>SUBCELLULAR LOCATION</scope>
    <scope>TISSUE SPECIFICITY</scope>
    <scope>INDUCTION</scope>
    <scope>DISRUPTION PHENOTYPE</scope>
</reference>
<reference key="6">
    <citation type="journal article" date="2012" name="Biochem. Biophys. Res. Commun.">
        <title>Interaction between a plasma membrane-localized ankyrin-repeat protein ITN1 and a nuclear protein RTV1.</title>
        <authorList>
            <person name="Sakamoto H."/>
            <person name="Sakata K."/>
            <person name="Kusumi K."/>
            <person name="Kojima M."/>
            <person name="Sakakibara H."/>
            <person name="Iba K."/>
        </authorList>
    </citation>
    <scope>INTERACTION WITH REM19/RTV1</scope>
    <scope>SUBCELLULAR LOCATION</scope>
</reference>
<accession>Q9C7A2</accession>
<accession>Q8LED2</accession>
<accession>Q9LHH2</accession>
<proteinExistence type="evidence at protein level"/>
<feature type="chain" id="PRO_0000274930" description="Ankyrin repeat-containing protein ITN1">
    <location>
        <begin position="1"/>
        <end position="590"/>
    </location>
</feature>
<feature type="transmembrane region" description="Helical" evidence="1">
    <location>
        <begin position="422"/>
        <end position="442"/>
    </location>
</feature>
<feature type="transmembrane region" description="Helical" evidence="1">
    <location>
        <begin position="460"/>
        <end position="480"/>
    </location>
</feature>
<feature type="transmembrane region" description="Helical" evidence="1">
    <location>
        <begin position="500"/>
        <end position="520"/>
    </location>
</feature>
<feature type="transmembrane region" description="Helical" evidence="1">
    <location>
        <begin position="531"/>
        <end position="551"/>
    </location>
</feature>
<feature type="repeat" description="ANK 1">
    <location>
        <begin position="73"/>
        <end position="102"/>
    </location>
</feature>
<feature type="repeat" description="ANK 2">
    <location>
        <begin position="128"/>
        <end position="157"/>
    </location>
</feature>
<feature type="repeat" description="ANK 3">
    <location>
        <begin position="163"/>
        <end position="192"/>
    </location>
</feature>
<feature type="repeat" description="ANK 4">
    <location>
        <begin position="197"/>
        <end position="226"/>
    </location>
</feature>
<feature type="repeat" description="ANK 5">
    <location>
        <begin position="231"/>
        <end position="260"/>
    </location>
</feature>
<feature type="repeat" description="ANK 6">
    <location>
        <begin position="265"/>
        <end position="294"/>
    </location>
</feature>
<feature type="repeat" description="ANK 7">
    <location>
        <begin position="299"/>
        <end position="329"/>
    </location>
</feature>
<feature type="region of interest" description="Disordered" evidence="2">
    <location>
        <begin position="25"/>
        <end position="44"/>
    </location>
</feature>
<feature type="sequence conflict" description="In Ref. 4; AAM62711." evidence="6" ref="4">
    <original>L</original>
    <variation>S</variation>
    <location>
        <position position="183"/>
    </location>
</feature>
<organism>
    <name type="scientific">Arabidopsis thaliana</name>
    <name type="common">Mouse-ear cress</name>
    <dbReference type="NCBI Taxonomy" id="3702"/>
    <lineage>
        <taxon>Eukaryota</taxon>
        <taxon>Viridiplantae</taxon>
        <taxon>Streptophyta</taxon>
        <taxon>Embryophyta</taxon>
        <taxon>Tracheophyta</taxon>
        <taxon>Spermatophyta</taxon>
        <taxon>Magnoliopsida</taxon>
        <taxon>eudicotyledons</taxon>
        <taxon>Gunneridae</taxon>
        <taxon>Pentapetalae</taxon>
        <taxon>rosids</taxon>
        <taxon>malvids</taxon>
        <taxon>Brassicales</taxon>
        <taxon>Brassicaceae</taxon>
        <taxon>Camelineae</taxon>
        <taxon>Arabidopsis</taxon>
    </lineage>
</organism>
<name>ITN1_ARATH</name>